<proteinExistence type="evidence at transcript level"/>
<organism>
    <name type="scientific">Rattus norvegicus</name>
    <name type="common">Rat</name>
    <dbReference type="NCBI Taxonomy" id="10116"/>
    <lineage>
        <taxon>Eukaryota</taxon>
        <taxon>Metazoa</taxon>
        <taxon>Chordata</taxon>
        <taxon>Craniata</taxon>
        <taxon>Vertebrata</taxon>
        <taxon>Euteleostomi</taxon>
        <taxon>Mammalia</taxon>
        <taxon>Eutheria</taxon>
        <taxon>Euarchontoglires</taxon>
        <taxon>Glires</taxon>
        <taxon>Rodentia</taxon>
        <taxon>Myomorpha</taxon>
        <taxon>Muroidea</taxon>
        <taxon>Muridae</taxon>
        <taxon>Murinae</taxon>
        <taxon>Rattus</taxon>
    </lineage>
</organism>
<evidence type="ECO:0000250" key="1">
    <source>
        <dbReference type="UniProtKB" id="Q8BMS4"/>
    </source>
</evidence>
<evidence type="ECO:0000255" key="2">
    <source>
        <dbReference type="HAMAP-Rule" id="MF_03190"/>
    </source>
</evidence>
<keyword id="KW-0007">Acetylation</keyword>
<keyword id="KW-0460">Magnesium</keyword>
<keyword id="KW-0472">Membrane</keyword>
<keyword id="KW-0479">Metal-binding</keyword>
<keyword id="KW-0489">Methyltransferase</keyword>
<keyword id="KW-0496">Mitochondrion</keyword>
<keyword id="KW-0999">Mitochondrion inner membrane</keyword>
<keyword id="KW-1185">Reference proteome</keyword>
<keyword id="KW-0949">S-adenosyl-L-methionine</keyword>
<keyword id="KW-0808">Transferase</keyword>
<keyword id="KW-0809">Transit peptide</keyword>
<keyword id="KW-0831">Ubiquinone biosynthesis</keyword>
<gene>
    <name evidence="2" type="primary">Coq3</name>
</gene>
<comment type="function">
    <text evidence="2">O-methyltransferase required for two non-consecutive steps during ubiquinone biosynthesis. Catalyzes the 2 O-methylation of 3,4-dihydroxy-5-(all-trans-decaprenyl)benzoic acid into 4-hydroxy-3-methoxy-5-(all-trans-decaprenyl)benzoic acid. Also catalyzes the last step of ubiquinone biosynthesis by mediating methylation of 3-demethylubiquinone into ubiquinone. Also able to mediate the methylation of 3-demethylubiquinol-10 into ubiquinol-10.</text>
</comment>
<comment type="catalytic activity">
    <reaction evidence="2">
        <text>3,4-dihydroxy-5-(all-trans-decaprenyl)benzoate + S-adenosyl-L-methionine = 4-hydroxy-3-methoxy-5-(all-trans-decaprenyl)benzoate + S-adenosyl-L-homocysteine + H(+)</text>
        <dbReference type="Rhea" id="RHEA:44492"/>
        <dbReference type="ChEBI" id="CHEBI:15378"/>
        <dbReference type="ChEBI" id="CHEBI:57856"/>
        <dbReference type="ChEBI" id="CHEBI:59789"/>
        <dbReference type="ChEBI" id="CHEBI:62793"/>
        <dbReference type="ChEBI" id="CHEBI:62796"/>
        <dbReference type="EC" id="2.1.1.114"/>
    </reaction>
</comment>
<comment type="catalytic activity">
    <reaction evidence="2">
        <text>a 3-demethylubiquinone + S-adenosyl-L-methionine = a ubiquinone + S-adenosyl-L-homocysteine</text>
        <dbReference type="Rhea" id="RHEA:81215"/>
        <dbReference type="Rhea" id="RHEA-COMP:9565"/>
        <dbReference type="Rhea" id="RHEA-COMP:19654"/>
        <dbReference type="ChEBI" id="CHEBI:16389"/>
        <dbReference type="ChEBI" id="CHEBI:57856"/>
        <dbReference type="ChEBI" id="CHEBI:59789"/>
        <dbReference type="ChEBI" id="CHEBI:231825"/>
    </reaction>
</comment>
<comment type="catalytic activity">
    <reaction evidence="2">
        <text>3-demethylubiquinol-10 + S-adenosyl-L-methionine = ubiquinol-10 + S-adenosyl-L-homocysteine + H(+)</text>
        <dbReference type="Rhea" id="RHEA:44412"/>
        <dbReference type="ChEBI" id="CHEBI:15378"/>
        <dbReference type="ChEBI" id="CHEBI:57856"/>
        <dbReference type="ChEBI" id="CHEBI:59789"/>
        <dbReference type="ChEBI" id="CHEBI:64182"/>
        <dbReference type="ChEBI" id="CHEBI:64183"/>
        <dbReference type="EC" id="2.1.1.64"/>
    </reaction>
</comment>
<comment type="cofactor">
    <cofactor evidence="2">
        <name>Mg(2+)</name>
        <dbReference type="ChEBI" id="CHEBI:18420"/>
    </cofactor>
</comment>
<comment type="pathway">
    <text evidence="2">Cofactor biosynthesis; ubiquinone biosynthesis.</text>
</comment>
<comment type="subunit">
    <text evidence="2">Component of a multi-subunit COQ enzyme complex, composed of at least COQ3, COQ4, COQ5, COQ6, COQ7 and COQ9.</text>
</comment>
<comment type="subcellular location">
    <subcellularLocation>
        <location evidence="2">Mitochondrion inner membrane</location>
        <topology evidence="2">Peripheral membrane protein</topology>
        <orientation evidence="2">Matrix side</orientation>
    </subcellularLocation>
</comment>
<comment type="similarity">
    <text evidence="2">Belongs to the class I-like SAM-binding methyltransferase superfamily. UbiG/COQ3 family.</text>
</comment>
<accession>Q63159</accession>
<accession>A0JN24</accession>
<accession>Q642D7</accession>
<name>COQ3_RAT</name>
<reference key="1">
    <citation type="journal article" date="2004" name="Genome Res.">
        <title>The status, quality, and expansion of the NIH full-length cDNA project: the Mammalian Gene Collection (MGC).</title>
        <authorList>
            <consortium name="The MGC Project Team"/>
        </authorList>
    </citation>
    <scope>NUCLEOTIDE SEQUENCE [LARGE SCALE MRNA]</scope>
    <source>
        <tissue>Brain</tissue>
        <tissue>Heart</tissue>
    </source>
</reference>
<reference key="2">
    <citation type="journal article" date="1994" name="Gene">
        <title>Cloning of a rat cDNA encoding dihydroxypolyprenylbenzoate methyltransferase by functional complementation of a Saccharomyces cerevisiae mutant deficient in ubiquinone biosynthesis.</title>
        <authorList>
            <person name="Marbois B.N."/>
            <person name="Hsu A."/>
            <person name="Pillai R."/>
            <person name="Colicelli J."/>
            <person name="Clarke C.F."/>
        </authorList>
    </citation>
    <scope>NUCLEOTIDE SEQUENCE [MRNA] OF 60-345</scope>
    <source>
        <strain>Sprague-Dawley</strain>
        <tissue>Testis</tissue>
    </source>
</reference>
<protein>
    <recommendedName>
        <fullName evidence="2">Ubiquinone biosynthesis O-methyltransferase, mitochondrial</fullName>
    </recommendedName>
    <alternativeName>
        <fullName evidence="2">3-demethylubiquinol 3-O-methyltransferase</fullName>
        <ecNumber evidence="2">2.1.1.64</ecNumber>
    </alternativeName>
    <alternativeName>
        <fullName evidence="2">3-demethylubiquinone 3-O-methyltransferase</fullName>
        <ecNumber evidence="2">2.1.1.-</ecNumber>
    </alternativeName>
    <alternativeName>
        <fullName evidence="2">Polyprenyldihydroxybenzoate methyltransferase</fullName>
        <ecNumber evidence="2">2.1.1.114</ecNumber>
    </alternativeName>
</protein>
<sequence>MWRGGRLSSRGVRFLETLGFACPSAVAEPPRVTSWTAFSGNQLTRNLQIKPWEFSGHRTMWLRSYRITFSCLTRLKTYRSSWKKLYSTSQTVDSKEVKTFQALAHSWWDEQGKFAPLHSMNDLRVPFIRDNLLKTSTNHDPGKPLSGMKILDVGCGGGLLTEPLGRLGASVVGIDPVAENIKIAQHHKSFDPVLDKRIQYRVCSLEETLNENAECFDAVVASEVVEHVNNLEMFIQCCYQVLKPGGSLFITTVNKTQLSYVLGIVFSEQIAGIVPKGTHTWEKFVSPEKLESILEPNGLSVETVAGMVYNPFSGYWHWTENTSLNYAAHAVRARAQEHLEPAESA</sequence>
<feature type="transit peptide" description="Mitochondrion" evidence="2">
    <location>
        <begin position="1"/>
        <end position="86"/>
    </location>
</feature>
<feature type="chain" id="PRO_0000035928" description="Ubiquinone biosynthesis O-methyltransferase, mitochondrial">
    <location>
        <begin position="87"/>
        <end position="345"/>
    </location>
</feature>
<feature type="binding site" evidence="2">
    <location>
        <position position="124"/>
    </location>
    <ligand>
        <name>S-adenosyl-L-methionine</name>
        <dbReference type="ChEBI" id="CHEBI:59789"/>
    </ligand>
</feature>
<feature type="binding site" evidence="2">
    <location>
        <position position="154"/>
    </location>
    <ligand>
        <name>S-adenosyl-L-methionine</name>
        <dbReference type="ChEBI" id="CHEBI:59789"/>
    </ligand>
</feature>
<feature type="binding site" evidence="2">
    <location>
        <position position="175"/>
    </location>
    <ligand>
        <name>S-adenosyl-L-methionine</name>
        <dbReference type="ChEBI" id="CHEBI:59789"/>
    </ligand>
</feature>
<feature type="binding site" evidence="2">
    <location>
        <position position="222"/>
    </location>
    <ligand>
        <name>S-adenosyl-L-methionine</name>
        <dbReference type="ChEBI" id="CHEBI:59789"/>
    </ligand>
</feature>
<feature type="binding site" evidence="2">
    <location>
        <position position="223"/>
    </location>
    <ligand>
        <name>Mg(2+)</name>
        <dbReference type="ChEBI" id="CHEBI:18420"/>
    </ligand>
</feature>
<feature type="binding site" evidence="2">
    <location>
        <position position="226"/>
    </location>
    <ligand>
        <name>Mg(2+)</name>
        <dbReference type="ChEBI" id="CHEBI:18420"/>
    </ligand>
</feature>
<feature type="binding site" evidence="2">
    <location>
        <position position="227"/>
    </location>
    <ligand>
        <name>Mg(2+)</name>
        <dbReference type="ChEBI" id="CHEBI:18420"/>
    </ligand>
</feature>
<feature type="modified residue" description="N6-acetyllysine" evidence="1">
    <location>
        <position position="143"/>
    </location>
</feature>
<feature type="modified residue" description="N6-acetyllysine" evidence="1">
    <location>
        <position position="149"/>
    </location>
</feature>
<feature type="modified residue" description="N6-acetyllysine" evidence="1">
    <location>
        <position position="196"/>
    </location>
</feature>
<dbReference type="EC" id="2.1.1.64" evidence="2"/>
<dbReference type="EC" id="2.1.1.-" evidence="2"/>
<dbReference type="EC" id="2.1.1.114" evidence="2"/>
<dbReference type="EMBL" id="BC081811">
    <property type="protein sequence ID" value="AAH81811.1"/>
    <property type="molecule type" value="mRNA"/>
</dbReference>
<dbReference type="EMBL" id="BC126094">
    <property type="protein sequence ID" value="AAI26095.1"/>
    <property type="molecule type" value="mRNA"/>
</dbReference>
<dbReference type="EMBL" id="L20427">
    <property type="protein sequence ID" value="AAC37643.1"/>
    <property type="molecule type" value="mRNA"/>
</dbReference>
<dbReference type="PIR" id="I53714">
    <property type="entry name" value="I53714"/>
</dbReference>
<dbReference type="RefSeq" id="NP_062060.2">
    <property type="nucleotide sequence ID" value="NM_019187.3"/>
</dbReference>
<dbReference type="RefSeq" id="XP_017448690.1">
    <property type="nucleotide sequence ID" value="XM_017593201.1"/>
</dbReference>
<dbReference type="SMR" id="Q63159"/>
<dbReference type="BioGRID" id="247973">
    <property type="interactions" value="1"/>
</dbReference>
<dbReference type="FunCoup" id="Q63159">
    <property type="interactions" value="1114"/>
</dbReference>
<dbReference type="STRING" id="10116.ENSRNOP00000013384"/>
<dbReference type="iPTMnet" id="Q63159"/>
<dbReference type="PhosphoSitePlus" id="Q63159"/>
<dbReference type="PaxDb" id="10116-ENSRNOP00000013384"/>
<dbReference type="Ensembl" id="ENSRNOT00000013384.8">
    <property type="protein sequence ID" value="ENSRNOP00000013384.5"/>
    <property type="gene ID" value="ENSRNOG00000009974.8"/>
</dbReference>
<dbReference type="GeneID" id="29309"/>
<dbReference type="KEGG" id="rno:29309"/>
<dbReference type="UCSC" id="RGD:2380">
    <property type="organism name" value="rat"/>
</dbReference>
<dbReference type="AGR" id="RGD:2380"/>
<dbReference type="CTD" id="51805"/>
<dbReference type="RGD" id="2380">
    <property type="gene designation" value="Coq3"/>
</dbReference>
<dbReference type="eggNOG" id="KOG1270">
    <property type="taxonomic scope" value="Eukaryota"/>
</dbReference>
<dbReference type="GeneTree" id="ENSGT00390000007284"/>
<dbReference type="HOGENOM" id="CLU_042432_0_1_1"/>
<dbReference type="InParanoid" id="Q63159"/>
<dbReference type="OMA" id="LASRWWD"/>
<dbReference type="OrthoDB" id="3265906at2759"/>
<dbReference type="PhylomeDB" id="Q63159"/>
<dbReference type="BioCyc" id="MetaCyc:MONOMER-13874"/>
<dbReference type="BRENDA" id="2.1.1.114">
    <property type="organism ID" value="5301"/>
</dbReference>
<dbReference type="BRENDA" id="2.1.1.222">
    <property type="organism ID" value="5301"/>
</dbReference>
<dbReference type="BRENDA" id="2.1.1.64">
    <property type="organism ID" value="5301"/>
</dbReference>
<dbReference type="Reactome" id="R-RNO-2142789">
    <property type="pathway name" value="Ubiquinol biosynthesis"/>
</dbReference>
<dbReference type="UniPathway" id="UPA00232"/>
<dbReference type="PRO" id="PR:Q63159"/>
<dbReference type="Proteomes" id="UP000002494">
    <property type="component" value="Chromosome 5"/>
</dbReference>
<dbReference type="Bgee" id="ENSRNOG00000009974">
    <property type="expression patterns" value="Expressed in heart and 20 other cell types or tissues"/>
</dbReference>
<dbReference type="GO" id="GO:0031314">
    <property type="term" value="C:extrinsic component of mitochondrial inner membrane"/>
    <property type="evidence" value="ECO:0007669"/>
    <property type="project" value="UniProtKB-UniRule"/>
</dbReference>
<dbReference type="GO" id="GO:0005743">
    <property type="term" value="C:mitochondrial inner membrane"/>
    <property type="evidence" value="ECO:0000266"/>
    <property type="project" value="RGD"/>
</dbReference>
<dbReference type="GO" id="GO:0005759">
    <property type="term" value="C:mitochondrial matrix"/>
    <property type="evidence" value="ECO:0007669"/>
    <property type="project" value="Ensembl"/>
</dbReference>
<dbReference type="GO" id="GO:0005739">
    <property type="term" value="C:mitochondrion"/>
    <property type="evidence" value="ECO:0000266"/>
    <property type="project" value="RGD"/>
</dbReference>
<dbReference type="GO" id="GO:0110142">
    <property type="term" value="C:ubiquinone biosynthesis complex"/>
    <property type="evidence" value="ECO:0000266"/>
    <property type="project" value="RGD"/>
</dbReference>
<dbReference type="GO" id="GO:0061542">
    <property type="term" value="F:3-demethylubiquinol 3-O-methyltransferase activity"/>
    <property type="evidence" value="ECO:0000266"/>
    <property type="project" value="RGD"/>
</dbReference>
<dbReference type="GO" id="GO:0120537">
    <property type="term" value="F:3-demethylubiquinone 3-O-methyltransferase activity"/>
    <property type="evidence" value="ECO:0000250"/>
    <property type="project" value="UniProtKB"/>
</dbReference>
<dbReference type="GO" id="GO:0008171">
    <property type="term" value="F:O-methyltransferase activity"/>
    <property type="evidence" value="ECO:0000266"/>
    <property type="project" value="RGD"/>
</dbReference>
<dbReference type="GO" id="GO:0010420">
    <property type="term" value="F:polyprenyldihydroxybenzoate methyltransferase activity"/>
    <property type="evidence" value="ECO:0000250"/>
    <property type="project" value="UniProtKB"/>
</dbReference>
<dbReference type="GO" id="GO:0006071">
    <property type="term" value="P:glycerol metabolic process"/>
    <property type="evidence" value="ECO:0000266"/>
    <property type="project" value="RGD"/>
</dbReference>
<dbReference type="GO" id="GO:0032259">
    <property type="term" value="P:methylation"/>
    <property type="evidence" value="ECO:0000314"/>
    <property type="project" value="RGD"/>
</dbReference>
<dbReference type="GO" id="GO:0006744">
    <property type="term" value="P:ubiquinone biosynthetic process"/>
    <property type="evidence" value="ECO:0000250"/>
    <property type="project" value="UniProtKB"/>
</dbReference>
<dbReference type="CDD" id="cd02440">
    <property type="entry name" value="AdoMet_MTases"/>
    <property type="match status" value="1"/>
</dbReference>
<dbReference type="FunFam" id="3.40.50.150:FF:000142">
    <property type="entry name" value="Ubiquinone biosynthesis O-methyltransferase, mitochondrial"/>
    <property type="match status" value="1"/>
</dbReference>
<dbReference type="Gene3D" id="3.40.50.150">
    <property type="entry name" value="Vaccinia Virus protein VP39"/>
    <property type="match status" value="1"/>
</dbReference>
<dbReference type="HAMAP" id="MF_00472">
    <property type="entry name" value="UbiG"/>
    <property type="match status" value="1"/>
</dbReference>
<dbReference type="InterPro" id="IPR029063">
    <property type="entry name" value="SAM-dependent_MTases_sf"/>
</dbReference>
<dbReference type="InterPro" id="IPR010233">
    <property type="entry name" value="UbiG_MeTrfase"/>
</dbReference>
<dbReference type="NCBIfam" id="TIGR01983">
    <property type="entry name" value="UbiG"/>
    <property type="match status" value="1"/>
</dbReference>
<dbReference type="PANTHER" id="PTHR43464">
    <property type="entry name" value="METHYLTRANSFERASE"/>
    <property type="match status" value="1"/>
</dbReference>
<dbReference type="PANTHER" id="PTHR43464:SF19">
    <property type="entry name" value="UBIQUINONE BIOSYNTHESIS O-METHYLTRANSFERASE, MITOCHONDRIAL"/>
    <property type="match status" value="1"/>
</dbReference>
<dbReference type="Pfam" id="PF13489">
    <property type="entry name" value="Methyltransf_23"/>
    <property type="match status" value="1"/>
</dbReference>
<dbReference type="SUPFAM" id="SSF53335">
    <property type="entry name" value="S-adenosyl-L-methionine-dependent methyltransferases"/>
    <property type="match status" value="1"/>
</dbReference>